<accession>A6LDS8</accession>
<name>MIAA2_PARD8</name>
<feature type="chain" id="PRO_0000377251" description="tRNA dimethylallyltransferase 2">
    <location>
        <begin position="1"/>
        <end position="299"/>
    </location>
</feature>
<feature type="region of interest" description="Interaction with substrate tRNA" evidence="1">
    <location>
        <begin position="34"/>
        <end position="37"/>
    </location>
</feature>
<feature type="binding site" evidence="1">
    <location>
        <begin position="9"/>
        <end position="16"/>
    </location>
    <ligand>
        <name>ATP</name>
        <dbReference type="ChEBI" id="CHEBI:30616"/>
    </ligand>
</feature>
<feature type="binding site" evidence="1">
    <location>
        <begin position="11"/>
        <end position="16"/>
    </location>
    <ligand>
        <name>substrate</name>
    </ligand>
</feature>
<feature type="site" description="Interaction with substrate tRNA" evidence="1">
    <location>
        <position position="100"/>
    </location>
</feature>
<feature type="site" description="Interaction with substrate tRNA" evidence="1">
    <location>
        <position position="122"/>
    </location>
</feature>
<evidence type="ECO:0000255" key="1">
    <source>
        <dbReference type="HAMAP-Rule" id="MF_00185"/>
    </source>
</evidence>
<dbReference type="EC" id="2.5.1.75" evidence="1"/>
<dbReference type="EMBL" id="CP000140">
    <property type="protein sequence ID" value="ABR43842.1"/>
    <property type="molecule type" value="Genomic_DNA"/>
</dbReference>
<dbReference type="SMR" id="A6LDS8"/>
<dbReference type="STRING" id="435591.BDI_2111"/>
<dbReference type="PaxDb" id="435591-BDI_2111"/>
<dbReference type="KEGG" id="pdi:BDI_2111"/>
<dbReference type="eggNOG" id="COG0324">
    <property type="taxonomic scope" value="Bacteria"/>
</dbReference>
<dbReference type="HOGENOM" id="CLU_032616_0_1_10"/>
<dbReference type="BioCyc" id="PDIS435591:G1G5A-2165-MONOMER"/>
<dbReference type="Proteomes" id="UP000000566">
    <property type="component" value="Chromosome"/>
</dbReference>
<dbReference type="GO" id="GO:0005524">
    <property type="term" value="F:ATP binding"/>
    <property type="evidence" value="ECO:0007669"/>
    <property type="project" value="UniProtKB-UniRule"/>
</dbReference>
<dbReference type="GO" id="GO:0052381">
    <property type="term" value="F:tRNA dimethylallyltransferase activity"/>
    <property type="evidence" value="ECO:0007669"/>
    <property type="project" value="UniProtKB-UniRule"/>
</dbReference>
<dbReference type="GO" id="GO:0006400">
    <property type="term" value="P:tRNA modification"/>
    <property type="evidence" value="ECO:0007669"/>
    <property type="project" value="TreeGrafter"/>
</dbReference>
<dbReference type="Gene3D" id="1.10.20.140">
    <property type="match status" value="1"/>
</dbReference>
<dbReference type="Gene3D" id="3.40.50.300">
    <property type="entry name" value="P-loop containing nucleotide triphosphate hydrolases"/>
    <property type="match status" value="1"/>
</dbReference>
<dbReference type="HAMAP" id="MF_00185">
    <property type="entry name" value="IPP_trans"/>
    <property type="match status" value="1"/>
</dbReference>
<dbReference type="InterPro" id="IPR039657">
    <property type="entry name" value="Dimethylallyltransferase"/>
</dbReference>
<dbReference type="InterPro" id="IPR018022">
    <property type="entry name" value="IPT"/>
</dbReference>
<dbReference type="InterPro" id="IPR027417">
    <property type="entry name" value="P-loop_NTPase"/>
</dbReference>
<dbReference type="NCBIfam" id="TIGR00174">
    <property type="entry name" value="miaA"/>
    <property type="match status" value="1"/>
</dbReference>
<dbReference type="PANTHER" id="PTHR11088">
    <property type="entry name" value="TRNA DIMETHYLALLYLTRANSFERASE"/>
    <property type="match status" value="1"/>
</dbReference>
<dbReference type="PANTHER" id="PTHR11088:SF60">
    <property type="entry name" value="TRNA DIMETHYLALLYLTRANSFERASE"/>
    <property type="match status" value="1"/>
</dbReference>
<dbReference type="Pfam" id="PF01715">
    <property type="entry name" value="IPPT"/>
    <property type="match status" value="1"/>
</dbReference>
<dbReference type="SUPFAM" id="SSF52540">
    <property type="entry name" value="P-loop containing nucleoside triphosphate hydrolases"/>
    <property type="match status" value="2"/>
</dbReference>
<reference key="1">
    <citation type="journal article" date="2007" name="PLoS Biol.">
        <title>Evolution of symbiotic bacteria in the distal human intestine.</title>
        <authorList>
            <person name="Xu J."/>
            <person name="Mahowald M.A."/>
            <person name="Ley R.E."/>
            <person name="Lozupone C.A."/>
            <person name="Hamady M."/>
            <person name="Martens E.C."/>
            <person name="Henrissat B."/>
            <person name="Coutinho P.M."/>
            <person name="Minx P."/>
            <person name="Latreille P."/>
            <person name="Cordum H."/>
            <person name="Van Brunt A."/>
            <person name="Kim K."/>
            <person name="Fulton R.S."/>
            <person name="Fulton L.A."/>
            <person name="Clifton S.W."/>
            <person name="Wilson R.K."/>
            <person name="Knight R.D."/>
            <person name="Gordon J.I."/>
        </authorList>
    </citation>
    <scope>NUCLEOTIDE SEQUENCE [LARGE SCALE GENOMIC DNA]</scope>
    <source>
        <strain>ATCC 8503 / DSM 20701 / CIP 104284 / JCM 5825 / NCTC 11152</strain>
    </source>
</reference>
<keyword id="KW-0067">ATP-binding</keyword>
<keyword id="KW-0460">Magnesium</keyword>
<keyword id="KW-0547">Nucleotide-binding</keyword>
<keyword id="KW-1185">Reference proteome</keyword>
<keyword id="KW-0808">Transferase</keyword>
<keyword id="KW-0819">tRNA processing</keyword>
<protein>
    <recommendedName>
        <fullName evidence="1">tRNA dimethylallyltransferase 2</fullName>
        <ecNumber evidence="1">2.5.1.75</ecNumber>
    </recommendedName>
    <alternativeName>
        <fullName evidence="1">Dimethylallyl diphosphate:tRNA dimethylallyltransferase 2</fullName>
        <shortName evidence="1">DMAPP:tRNA dimethylallyltransferase 2</shortName>
        <shortName evidence="1">DMATase 2</shortName>
    </alternativeName>
    <alternativeName>
        <fullName evidence="1">Isopentenyl-diphosphate:tRNA isopentenyltransferase 2</fullName>
        <shortName evidence="1">IPP transferase 2</shortName>
        <shortName evidence="1">IPPT 2</shortName>
        <shortName evidence="1">IPTase 2</shortName>
    </alternativeName>
</protein>
<organism>
    <name type="scientific">Parabacteroides distasonis (strain ATCC 8503 / DSM 20701 / CIP 104284 / JCM 5825 / NCTC 11152)</name>
    <dbReference type="NCBI Taxonomy" id="435591"/>
    <lineage>
        <taxon>Bacteria</taxon>
        <taxon>Pseudomonadati</taxon>
        <taxon>Bacteroidota</taxon>
        <taxon>Bacteroidia</taxon>
        <taxon>Bacteroidales</taxon>
        <taxon>Tannerellaceae</taxon>
        <taxon>Parabacteroides</taxon>
    </lineage>
</organism>
<sequence>MNSLVILLGPTGVGKTELSLQVAERFGSPIISSDSRQLYKDLPIGTAAPTPEQMARVKHYMVGTLSLTDYYSASNFEEDVVSLLSELHKTIPTVVMTGGSMMYIDAVCKGIDDIPTVTPEIRDALYMQFETEGLAPILAELKEADPVHYEEVDRNNYKRVIHAVEICRMTGKPYSSFRTNIKKERPFRIIKVGLNRDRDELCDRINQRVDQMMSEGLLEEARRAYPFRHLNSLNTVGYKELFNYFSGEWTLDLAVEKIKRNSRVYARKQMTWFKRDPEITWFHPDETEAIFTHLSQQII</sequence>
<proteinExistence type="inferred from homology"/>
<comment type="function">
    <text evidence="1">Catalyzes the transfer of a dimethylallyl group onto the adenine at position 37 in tRNAs that read codons beginning with uridine, leading to the formation of N6-(dimethylallyl)adenosine (i(6)A).</text>
</comment>
<comment type="catalytic activity">
    <reaction evidence="1">
        <text>adenosine(37) in tRNA + dimethylallyl diphosphate = N(6)-dimethylallyladenosine(37) in tRNA + diphosphate</text>
        <dbReference type="Rhea" id="RHEA:26482"/>
        <dbReference type="Rhea" id="RHEA-COMP:10162"/>
        <dbReference type="Rhea" id="RHEA-COMP:10375"/>
        <dbReference type="ChEBI" id="CHEBI:33019"/>
        <dbReference type="ChEBI" id="CHEBI:57623"/>
        <dbReference type="ChEBI" id="CHEBI:74411"/>
        <dbReference type="ChEBI" id="CHEBI:74415"/>
        <dbReference type="EC" id="2.5.1.75"/>
    </reaction>
</comment>
<comment type="cofactor">
    <cofactor evidence="1">
        <name>Mg(2+)</name>
        <dbReference type="ChEBI" id="CHEBI:18420"/>
    </cofactor>
</comment>
<comment type="subunit">
    <text evidence="1">Monomer.</text>
</comment>
<comment type="similarity">
    <text evidence="1">Belongs to the IPP transferase family.</text>
</comment>
<gene>
    <name evidence="1" type="primary">miaA2</name>
    <name type="ordered locus">BDI_2111</name>
</gene>